<reference key="1">
    <citation type="journal article" date="2001" name="DNA Res.">
        <title>Complete genome sequence of an aerobic thermoacidophilic Crenarchaeon, Sulfolobus tokodaii strain7.</title>
        <authorList>
            <person name="Kawarabayasi Y."/>
            <person name="Hino Y."/>
            <person name="Horikawa H."/>
            <person name="Jin-no K."/>
            <person name="Takahashi M."/>
            <person name="Sekine M."/>
            <person name="Baba S."/>
            <person name="Ankai A."/>
            <person name="Kosugi H."/>
            <person name="Hosoyama A."/>
            <person name="Fukui S."/>
            <person name="Nagai Y."/>
            <person name="Nishijima K."/>
            <person name="Otsuka R."/>
            <person name="Nakazawa H."/>
            <person name="Takamiya M."/>
            <person name="Kato Y."/>
            <person name="Yoshizawa T."/>
            <person name="Tanaka T."/>
            <person name="Kudoh Y."/>
            <person name="Yamazaki J."/>
            <person name="Kushida N."/>
            <person name="Oguchi A."/>
            <person name="Aoki K."/>
            <person name="Masuda S."/>
            <person name="Yanagii M."/>
            <person name="Nishimura M."/>
            <person name="Yamagishi A."/>
            <person name="Oshima T."/>
            <person name="Kikuchi H."/>
        </authorList>
    </citation>
    <scope>NUCLEOTIDE SEQUENCE [LARGE SCALE GENOMIC DNA]</scope>
    <source>
        <strain>DSM 16993 / JCM 10545 / NBRC 100140 / 7</strain>
    </source>
</reference>
<feature type="chain" id="PRO_0000135006" description="Nicotinamide-nucleotide adenylyltransferase">
    <location>
        <begin position="1"/>
        <end position="172"/>
    </location>
</feature>
<evidence type="ECO:0000255" key="1">
    <source>
        <dbReference type="HAMAP-Rule" id="MF_00243"/>
    </source>
</evidence>
<protein>
    <recommendedName>
        <fullName evidence="1">Nicotinamide-nucleotide adenylyltransferase</fullName>
        <ecNumber evidence="1">2.7.7.1</ecNumber>
    </recommendedName>
    <alternativeName>
        <fullName evidence="1">NAD(+) diphosphorylase</fullName>
    </alternativeName>
    <alternativeName>
        <fullName evidence="1">NAD(+) pyrophosphorylase</fullName>
    </alternativeName>
    <alternativeName>
        <fullName evidence="1">NMN adenylyltransferase</fullName>
    </alternativeName>
</protein>
<keyword id="KW-0067">ATP-binding</keyword>
<keyword id="KW-0963">Cytoplasm</keyword>
<keyword id="KW-0520">NAD</keyword>
<keyword id="KW-0547">Nucleotide-binding</keyword>
<keyword id="KW-0548">Nucleotidyltransferase</keyword>
<keyword id="KW-0662">Pyridine nucleotide biosynthesis</keyword>
<keyword id="KW-1185">Reference proteome</keyword>
<keyword id="KW-0808">Transferase</keyword>
<accession>Q974L1</accession>
<accession>F9VN64</accession>
<sequence length="172" mass="19956">MRAVFPGRFQPFHLGHLAVIEWLLSKYDELIIVVGSGKDSHTIYNPFTAGERILMIKKGLKEFNVDFTRVIFFPIMDSFTSGLWIRNLELYSPKFDVVVSGNPLVISDAREAGYIVDLPPMFNREMYNATKIRKLMLENNESWSELVPKSVYSFIKEIKGDERLRDIARNDY</sequence>
<name>NADM_SULTO</name>
<gene>
    <name type="ordered locus">STK_06480</name>
</gene>
<dbReference type="EC" id="2.7.7.1" evidence="1"/>
<dbReference type="EMBL" id="BA000023">
    <property type="protein sequence ID" value="BAK54361.1"/>
    <property type="molecule type" value="Genomic_DNA"/>
</dbReference>
<dbReference type="RefSeq" id="WP_052846904.1">
    <property type="nucleotide sequence ID" value="NC_003106.2"/>
</dbReference>
<dbReference type="SMR" id="Q974L1"/>
<dbReference type="STRING" id="273063.STK_06480"/>
<dbReference type="GeneID" id="1458597"/>
<dbReference type="KEGG" id="sto:STK_06480"/>
<dbReference type="PATRIC" id="fig|273063.9.peg.734"/>
<dbReference type="eggNOG" id="arCOG00972">
    <property type="taxonomic scope" value="Archaea"/>
</dbReference>
<dbReference type="OrthoDB" id="264480at2157"/>
<dbReference type="UniPathway" id="UPA00253">
    <property type="reaction ID" value="UER00600"/>
</dbReference>
<dbReference type="Proteomes" id="UP000001015">
    <property type="component" value="Chromosome"/>
</dbReference>
<dbReference type="GO" id="GO:0005737">
    <property type="term" value="C:cytoplasm"/>
    <property type="evidence" value="ECO:0007669"/>
    <property type="project" value="UniProtKB-SubCell"/>
</dbReference>
<dbReference type="GO" id="GO:0005524">
    <property type="term" value="F:ATP binding"/>
    <property type="evidence" value="ECO:0007669"/>
    <property type="project" value="UniProtKB-KW"/>
</dbReference>
<dbReference type="GO" id="GO:0000309">
    <property type="term" value="F:nicotinamide-nucleotide adenylyltransferase activity"/>
    <property type="evidence" value="ECO:0007669"/>
    <property type="project" value="UniProtKB-UniRule"/>
</dbReference>
<dbReference type="GO" id="GO:0009435">
    <property type="term" value="P:NAD biosynthetic process"/>
    <property type="evidence" value="ECO:0007669"/>
    <property type="project" value="UniProtKB-UniRule"/>
</dbReference>
<dbReference type="CDD" id="cd02166">
    <property type="entry name" value="NMNAT_Archaea"/>
    <property type="match status" value="1"/>
</dbReference>
<dbReference type="Gene3D" id="3.40.50.620">
    <property type="entry name" value="HUPs"/>
    <property type="match status" value="1"/>
</dbReference>
<dbReference type="HAMAP" id="MF_00243">
    <property type="entry name" value="NMN_adenylyltr"/>
    <property type="match status" value="1"/>
</dbReference>
<dbReference type="InterPro" id="IPR004821">
    <property type="entry name" value="Cyt_trans-like"/>
</dbReference>
<dbReference type="InterPro" id="IPR006418">
    <property type="entry name" value="NMN_Atrans_arc"/>
</dbReference>
<dbReference type="InterPro" id="IPR014729">
    <property type="entry name" value="Rossmann-like_a/b/a_fold"/>
</dbReference>
<dbReference type="NCBIfam" id="TIGR01527">
    <property type="entry name" value="arch_NMN_Atrans"/>
    <property type="match status" value="1"/>
</dbReference>
<dbReference type="NCBIfam" id="TIGR00125">
    <property type="entry name" value="cyt_tran_rel"/>
    <property type="match status" value="1"/>
</dbReference>
<dbReference type="NCBIfam" id="NF002243">
    <property type="entry name" value="PRK01153.1"/>
    <property type="match status" value="1"/>
</dbReference>
<dbReference type="PANTHER" id="PTHR21342:SF0">
    <property type="entry name" value="BIFUNCTIONAL NMN ADENYLYLTRANSFERASE_NUDIX HYDROLASE"/>
    <property type="match status" value="1"/>
</dbReference>
<dbReference type="PANTHER" id="PTHR21342">
    <property type="entry name" value="PHOSPHOPANTETHEINE ADENYLYLTRANSFERASE"/>
    <property type="match status" value="1"/>
</dbReference>
<dbReference type="Pfam" id="PF01467">
    <property type="entry name" value="CTP_transf_like"/>
    <property type="match status" value="1"/>
</dbReference>
<dbReference type="SUPFAM" id="SSF52374">
    <property type="entry name" value="Nucleotidylyl transferase"/>
    <property type="match status" value="1"/>
</dbReference>
<comment type="catalytic activity">
    <reaction evidence="1">
        <text>beta-nicotinamide D-ribonucleotide + ATP + H(+) = diphosphate + NAD(+)</text>
        <dbReference type="Rhea" id="RHEA:21360"/>
        <dbReference type="ChEBI" id="CHEBI:14649"/>
        <dbReference type="ChEBI" id="CHEBI:15378"/>
        <dbReference type="ChEBI" id="CHEBI:30616"/>
        <dbReference type="ChEBI" id="CHEBI:33019"/>
        <dbReference type="ChEBI" id="CHEBI:57540"/>
        <dbReference type="EC" id="2.7.7.1"/>
    </reaction>
</comment>
<comment type="pathway">
    <text evidence="1">Cofactor biosynthesis; NAD(+) biosynthesis; NAD(+) from nicotinamide D-ribonucleotide: step 1/1.</text>
</comment>
<comment type="subcellular location">
    <subcellularLocation>
        <location evidence="1">Cytoplasm</location>
    </subcellularLocation>
</comment>
<comment type="similarity">
    <text evidence="1">Belongs to the archaeal NMN adenylyltransferase family.</text>
</comment>
<proteinExistence type="inferred from homology"/>
<organism>
    <name type="scientific">Sulfurisphaera tokodaii (strain DSM 16993 / JCM 10545 / NBRC 100140 / 7)</name>
    <name type="common">Sulfolobus tokodaii</name>
    <dbReference type="NCBI Taxonomy" id="273063"/>
    <lineage>
        <taxon>Archaea</taxon>
        <taxon>Thermoproteota</taxon>
        <taxon>Thermoprotei</taxon>
        <taxon>Sulfolobales</taxon>
        <taxon>Sulfolobaceae</taxon>
        <taxon>Sulfurisphaera</taxon>
    </lineage>
</organism>